<name>NHAB_PHOLL</name>
<accession>Q7N3Z4</accession>
<organism>
    <name type="scientific">Photorhabdus laumondii subsp. laumondii (strain DSM 15139 / CIP 105565 / TT01)</name>
    <name type="common">Photorhabdus luminescens subsp. laumondii</name>
    <dbReference type="NCBI Taxonomy" id="243265"/>
    <lineage>
        <taxon>Bacteria</taxon>
        <taxon>Pseudomonadati</taxon>
        <taxon>Pseudomonadota</taxon>
        <taxon>Gammaproteobacteria</taxon>
        <taxon>Enterobacterales</taxon>
        <taxon>Morganellaceae</taxon>
        <taxon>Photorhabdus</taxon>
    </lineage>
</organism>
<keyword id="KW-0050">Antiport</keyword>
<keyword id="KW-0997">Cell inner membrane</keyword>
<keyword id="KW-1003">Cell membrane</keyword>
<keyword id="KW-0406">Ion transport</keyword>
<keyword id="KW-0472">Membrane</keyword>
<keyword id="KW-1185">Reference proteome</keyword>
<keyword id="KW-0915">Sodium</keyword>
<keyword id="KW-0739">Sodium transport</keyword>
<keyword id="KW-0812">Transmembrane</keyword>
<keyword id="KW-1133">Transmembrane helix</keyword>
<keyword id="KW-0813">Transport</keyword>
<protein>
    <recommendedName>
        <fullName evidence="1">Na(+)/H(+) antiporter NhaB</fullName>
    </recommendedName>
    <alternativeName>
        <fullName evidence="1">Sodium/proton antiporter NhaB</fullName>
    </alternativeName>
</protein>
<evidence type="ECO:0000255" key="1">
    <source>
        <dbReference type="HAMAP-Rule" id="MF_01599"/>
    </source>
</evidence>
<dbReference type="EMBL" id="BX571867">
    <property type="protein sequence ID" value="CAE14937.1"/>
    <property type="molecule type" value="Genomic_DNA"/>
</dbReference>
<dbReference type="RefSeq" id="WP_011146786.1">
    <property type="nucleotide sequence ID" value="NC_005126.1"/>
</dbReference>
<dbReference type="SMR" id="Q7N3Z4"/>
<dbReference type="STRING" id="243265.plu2563"/>
<dbReference type="GeneID" id="48848824"/>
<dbReference type="KEGG" id="plu:plu2563"/>
<dbReference type="eggNOG" id="COG3067">
    <property type="taxonomic scope" value="Bacteria"/>
</dbReference>
<dbReference type="HOGENOM" id="CLU_041110_0_0_6"/>
<dbReference type="OrthoDB" id="5288732at2"/>
<dbReference type="Proteomes" id="UP000002514">
    <property type="component" value="Chromosome"/>
</dbReference>
<dbReference type="GO" id="GO:0005886">
    <property type="term" value="C:plasma membrane"/>
    <property type="evidence" value="ECO:0007669"/>
    <property type="project" value="UniProtKB-SubCell"/>
</dbReference>
<dbReference type="GO" id="GO:0015385">
    <property type="term" value="F:sodium:proton antiporter activity"/>
    <property type="evidence" value="ECO:0007669"/>
    <property type="project" value="InterPro"/>
</dbReference>
<dbReference type="HAMAP" id="MF_01599">
    <property type="entry name" value="NhaB"/>
    <property type="match status" value="1"/>
</dbReference>
<dbReference type="InterPro" id="IPR004671">
    <property type="entry name" value="Na+/H+_antiporter_NhaB"/>
</dbReference>
<dbReference type="NCBIfam" id="TIGR00774">
    <property type="entry name" value="NhaB"/>
    <property type="match status" value="1"/>
</dbReference>
<dbReference type="NCBIfam" id="NF007093">
    <property type="entry name" value="PRK09547.1"/>
    <property type="match status" value="1"/>
</dbReference>
<dbReference type="PANTHER" id="PTHR43302:SF1">
    <property type="entry name" value="NA(+)_H(+) ANTIPORTER NHAB"/>
    <property type="match status" value="1"/>
</dbReference>
<dbReference type="PANTHER" id="PTHR43302">
    <property type="entry name" value="TRANSPORTER ARSB-RELATED"/>
    <property type="match status" value="1"/>
</dbReference>
<dbReference type="Pfam" id="PF06450">
    <property type="entry name" value="NhaB"/>
    <property type="match status" value="1"/>
</dbReference>
<feature type="chain" id="PRO_0000333104" description="Na(+)/H(+) antiporter NhaB">
    <location>
        <begin position="1"/>
        <end position="515"/>
    </location>
</feature>
<feature type="transmembrane region" description="Helical" evidence="1">
    <location>
        <begin position="23"/>
        <end position="43"/>
    </location>
</feature>
<feature type="transmembrane region" description="Helical" evidence="1">
    <location>
        <begin position="45"/>
        <end position="65"/>
    </location>
</feature>
<feature type="transmembrane region" description="Helical" evidence="1">
    <location>
        <begin position="96"/>
        <end position="116"/>
    </location>
</feature>
<feature type="transmembrane region" description="Helical" evidence="1">
    <location>
        <begin position="136"/>
        <end position="156"/>
    </location>
</feature>
<feature type="transmembrane region" description="Helical" evidence="1">
    <location>
        <begin position="204"/>
        <end position="224"/>
    </location>
</feature>
<feature type="transmembrane region" description="Helical" evidence="1">
    <location>
        <begin position="245"/>
        <end position="265"/>
    </location>
</feature>
<feature type="transmembrane region" description="Helical" evidence="1">
    <location>
        <begin position="305"/>
        <end position="325"/>
    </location>
</feature>
<feature type="transmembrane region" description="Helical" evidence="1">
    <location>
        <begin position="349"/>
        <end position="369"/>
    </location>
</feature>
<feature type="transmembrane region" description="Helical" evidence="1">
    <location>
        <begin position="393"/>
        <end position="413"/>
    </location>
</feature>
<feature type="transmembrane region" description="Helical" evidence="1">
    <location>
        <begin position="449"/>
        <end position="469"/>
    </location>
</feature>
<feature type="transmembrane region" description="Helical" evidence="1">
    <location>
        <begin position="480"/>
        <end position="500"/>
    </location>
</feature>
<sequence>METSILKTAVKNFLGNSPDWYKLAIIIFLIINPLIFFFINPFVTGWLLVIEFIFTLAMALKCYPLQPGGLLAIEAVIIGMTSPQQVGHEIANNLEVVLLLIFMVAGIYFMKQLLLFAFTKLLLSIKSKRMLALAFCLASAFLSAFLDALTVIAVVISVSLGFYSIYNNFITDQNDVINAKHDNHIDTAKKKQTLEQFRAFLRSLMMHAGVGTALGGVMTMVGEPQNLIIAKNVNWDFVTFFIRMAPITLPVFICGLLVCFLVEHFKLFGYGTELPERVRQVLEDYDKKTSAKRTHKEKAQLIAQALIGIWLIVALAFHLAEVGLIGLSVIILTTSFCGITEEHALGKAFEEALPFTALLTVFFSIVAVIVDQQLFTPFIQFVLQVSETSQLSLFYLFNGLLSSVSDNVFVGTVYINEARTAMQEGLISHKQFEYLAVAINTGTNLPSVATPNGQAAFLFLLTSTLSPLIRLSYGRMVIMALPYTIVMTLVGLLCVEFLLIPVTDMMVHWGLIALP</sequence>
<reference key="1">
    <citation type="journal article" date="2003" name="Nat. Biotechnol.">
        <title>The genome sequence of the entomopathogenic bacterium Photorhabdus luminescens.</title>
        <authorList>
            <person name="Duchaud E."/>
            <person name="Rusniok C."/>
            <person name="Frangeul L."/>
            <person name="Buchrieser C."/>
            <person name="Givaudan A."/>
            <person name="Taourit S."/>
            <person name="Bocs S."/>
            <person name="Boursaux-Eude C."/>
            <person name="Chandler M."/>
            <person name="Charles J.-F."/>
            <person name="Dassa E."/>
            <person name="Derose R."/>
            <person name="Derzelle S."/>
            <person name="Freyssinet G."/>
            <person name="Gaudriault S."/>
            <person name="Medigue C."/>
            <person name="Lanois A."/>
            <person name="Powell K."/>
            <person name="Siguier P."/>
            <person name="Vincent R."/>
            <person name="Wingate V."/>
            <person name="Zouine M."/>
            <person name="Glaser P."/>
            <person name="Boemare N."/>
            <person name="Danchin A."/>
            <person name="Kunst F."/>
        </authorList>
    </citation>
    <scope>NUCLEOTIDE SEQUENCE [LARGE SCALE GENOMIC DNA]</scope>
    <source>
        <strain>DSM 15139 / CIP 105565 / TT01</strain>
    </source>
</reference>
<proteinExistence type="inferred from homology"/>
<gene>
    <name evidence="1" type="primary">nhaB</name>
    <name type="ordered locus">plu2563</name>
</gene>
<comment type="function">
    <text evidence="1">Na(+)/H(+) antiporter that extrudes sodium in exchange for external protons.</text>
</comment>
<comment type="catalytic activity">
    <reaction evidence="1">
        <text>2 Na(+)(in) + 3 H(+)(out) = 2 Na(+)(out) + 3 H(+)(in)</text>
        <dbReference type="Rhea" id="RHEA:29247"/>
        <dbReference type="ChEBI" id="CHEBI:15378"/>
        <dbReference type="ChEBI" id="CHEBI:29101"/>
    </reaction>
    <physiologicalReaction direction="left-to-right" evidence="1">
        <dbReference type="Rhea" id="RHEA:29248"/>
    </physiologicalReaction>
</comment>
<comment type="subcellular location">
    <subcellularLocation>
        <location evidence="1">Cell inner membrane</location>
        <topology evidence="1">Multi-pass membrane protein</topology>
    </subcellularLocation>
</comment>
<comment type="similarity">
    <text evidence="1">Belongs to the NhaB Na(+)/H(+) (TC 2.A.34) antiporter family.</text>
</comment>